<dbReference type="EC" id="2.1.1.14" evidence="1"/>
<dbReference type="EMBL" id="CP001144">
    <property type="protein sequence ID" value="ACH73625.1"/>
    <property type="molecule type" value="Genomic_DNA"/>
</dbReference>
<dbReference type="RefSeq" id="WP_000154200.1">
    <property type="nucleotide sequence ID" value="NC_011205.1"/>
</dbReference>
<dbReference type="SMR" id="B5FNW1"/>
<dbReference type="KEGG" id="sed:SeD_A4351"/>
<dbReference type="HOGENOM" id="CLU_013175_0_0_6"/>
<dbReference type="UniPathway" id="UPA00051">
    <property type="reaction ID" value="UER00082"/>
</dbReference>
<dbReference type="Proteomes" id="UP000008322">
    <property type="component" value="Chromosome"/>
</dbReference>
<dbReference type="GO" id="GO:0003871">
    <property type="term" value="F:5-methyltetrahydropteroyltriglutamate-homocysteine S-methyltransferase activity"/>
    <property type="evidence" value="ECO:0007669"/>
    <property type="project" value="UniProtKB-UniRule"/>
</dbReference>
<dbReference type="GO" id="GO:0008270">
    <property type="term" value="F:zinc ion binding"/>
    <property type="evidence" value="ECO:0007669"/>
    <property type="project" value="InterPro"/>
</dbReference>
<dbReference type="GO" id="GO:0009086">
    <property type="term" value="P:methionine biosynthetic process"/>
    <property type="evidence" value="ECO:0007669"/>
    <property type="project" value="UniProtKB-UniRule"/>
</dbReference>
<dbReference type="GO" id="GO:0032259">
    <property type="term" value="P:methylation"/>
    <property type="evidence" value="ECO:0007669"/>
    <property type="project" value="UniProtKB-KW"/>
</dbReference>
<dbReference type="CDD" id="cd03311">
    <property type="entry name" value="CIMS_C_terminal_like"/>
    <property type="match status" value="1"/>
</dbReference>
<dbReference type="CDD" id="cd03312">
    <property type="entry name" value="CIMS_N_terminal_like"/>
    <property type="match status" value="1"/>
</dbReference>
<dbReference type="FunFam" id="3.20.20.210:FF:000002">
    <property type="entry name" value="5-methyltetrahydropteroyltriglutamate--homocysteine methyltransferase"/>
    <property type="match status" value="1"/>
</dbReference>
<dbReference type="FunFam" id="3.20.20.210:FF:000003">
    <property type="entry name" value="5-methyltetrahydropteroyltriglutamate--homocysteine methyltransferase"/>
    <property type="match status" value="1"/>
</dbReference>
<dbReference type="Gene3D" id="3.20.20.210">
    <property type="match status" value="2"/>
</dbReference>
<dbReference type="HAMAP" id="MF_00172">
    <property type="entry name" value="Meth_synth"/>
    <property type="match status" value="1"/>
</dbReference>
<dbReference type="InterPro" id="IPR013215">
    <property type="entry name" value="Cbl-indep_Met_Synth_N"/>
</dbReference>
<dbReference type="InterPro" id="IPR006276">
    <property type="entry name" value="Cobalamin-indep_Met_synthase"/>
</dbReference>
<dbReference type="InterPro" id="IPR002629">
    <property type="entry name" value="Met_Synth_C/arc"/>
</dbReference>
<dbReference type="InterPro" id="IPR038071">
    <property type="entry name" value="UROD/MetE-like_sf"/>
</dbReference>
<dbReference type="NCBIfam" id="TIGR01371">
    <property type="entry name" value="met_syn_B12ind"/>
    <property type="match status" value="1"/>
</dbReference>
<dbReference type="NCBIfam" id="NF003556">
    <property type="entry name" value="PRK05222.1"/>
    <property type="match status" value="1"/>
</dbReference>
<dbReference type="PANTHER" id="PTHR30519">
    <property type="entry name" value="5-METHYLTETRAHYDROPTEROYLTRIGLUTAMATE--HOMOCYSTEINE METHYLTRANSFERASE"/>
    <property type="match status" value="1"/>
</dbReference>
<dbReference type="Pfam" id="PF08267">
    <property type="entry name" value="Meth_synt_1"/>
    <property type="match status" value="1"/>
</dbReference>
<dbReference type="Pfam" id="PF01717">
    <property type="entry name" value="Meth_synt_2"/>
    <property type="match status" value="1"/>
</dbReference>
<dbReference type="PIRSF" id="PIRSF000382">
    <property type="entry name" value="MeTrfase_B12_ind"/>
    <property type="match status" value="1"/>
</dbReference>
<dbReference type="SUPFAM" id="SSF51726">
    <property type="entry name" value="UROD/MetE-like"/>
    <property type="match status" value="2"/>
</dbReference>
<comment type="function">
    <text evidence="1">Catalyzes the transfer of a methyl group from 5-methyltetrahydrofolate to homocysteine resulting in methionine formation.</text>
</comment>
<comment type="catalytic activity">
    <reaction evidence="1">
        <text>5-methyltetrahydropteroyltri-L-glutamate + L-homocysteine = tetrahydropteroyltri-L-glutamate + L-methionine</text>
        <dbReference type="Rhea" id="RHEA:21196"/>
        <dbReference type="ChEBI" id="CHEBI:57844"/>
        <dbReference type="ChEBI" id="CHEBI:58140"/>
        <dbReference type="ChEBI" id="CHEBI:58199"/>
        <dbReference type="ChEBI" id="CHEBI:58207"/>
        <dbReference type="EC" id="2.1.1.14"/>
    </reaction>
</comment>
<comment type="cofactor">
    <cofactor evidence="1">
        <name>Zn(2+)</name>
        <dbReference type="ChEBI" id="CHEBI:29105"/>
    </cofactor>
    <text evidence="1">Binds 1 zinc ion per subunit.</text>
</comment>
<comment type="pathway">
    <text evidence="1">Amino-acid biosynthesis; L-methionine biosynthesis via de novo pathway; L-methionine from L-homocysteine (MetE route): step 1/1.</text>
</comment>
<comment type="similarity">
    <text evidence="1">Belongs to the vitamin-B12 independent methionine synthase family.</text>
</comment>
<sequence>MTILTHTLGFPRVGLRRELKKAQESYWAGNTTREALLTVGRELRARHWEQQKQAGIDLLPVGDFAWYDHVLTTSLLLGNVPARHQNNDGSVDIDTLFRIGRGRAPTGEPAAAAEMTKWFNTNYHYIVPEFSKGQQFRLTWTQLLEEVDEALALGHKIKPVLLGPVTYLWLGKVKGEPFDRLTLLKDILPVYQHVLAELAKRGIEWVQIDEPALVLELPQAWLDAFKPAYDALAGQVKLLLTTYFEGVTPNLDTIIALPVQGLHVDLIHGKDDVAELHQRLPVDWLLSAGLINGRNVWRADLTEKYAQINAIVGKRALWVASSCSLLHSPIDLSVETRLDTEVKSWFAFALQKCGELALLRDALNSGETAALEEWSAPIQARRHSRRVHNAAVEKRLAAITAQDSQRENPYEVRAEAQRARFKLPAWPTTTIGSFPQTTEIRGLRLDFKKGNLDANNYRTGIAEHIKQAIIEQERLGLDVLVHGEAERNDMVEYFGEHLDGFVFTQNGWVQSYGSRCVKPPVVIGDISRPAPITVEWAKYAQSLTDKPVKGMLTGPVTILCWSFPREDVTRETIAKQIALALRDEVADLEAAGIGIIQIDEPALREGLPLRRSDWDAYLEWGVEAFRINAAVAKDETQIHTHMCYCEFNDIMDSIAALDADVITIETSRSDMELLESFEAFDYPNEIGPGVYDIHSPNVPSVEWIEALLKKAAQRIPAQRLWVNPDCGLKTRGWPETRAALANMVKAAHNLRQAK</sequence>
<name>METE_SALDC</name>
<reference key="1">
    <citation type="journal article" date="2011" name="J. Bacteriol.">
        <title>Comparative genomics of 28 Salmonella enterica isolates: evidence for CRISPR-mediated adaptive sublineage evolution.</title>
        <authorList>
            <person name="Fricke W.F."/>
            <person name="Mammel M.K."/>
            <person name="McDermott P.F."/>
            <person name="Tartera C."/>
            <person name="White D.G."/>
            <person name="Leclerc J.E."/>
            <person name="Ravel J."/>
            <person name="Cebula T.A."/>
        </authorList>
    </citation>
    <scope>NUCLEOTIDE SEQUENCE [LARGE SCALE GENOMIC DNA]</scope>
    <source>
        <strain>CT_02021853</strain>
    </source>
</reference>
<organism>
    <name type="scientific">Salmonella dublin (strain CT_02021853)</name>
    <dbReference type="NCBI Taxonomy" id="439851"/>
    <lineage>
        <taxon>Bacteria</taxon>
        <taxon>Pseudomonadati</taxon>
        <taxon>Pseudomonadota</taxon>
        <taxon>Gammaproteobacteria</taxon>
        <taxon>Enterobacterales</taxon>
        <taxon>Enterobacteriaceae</taxon>
        <taxon>Salmonella</taxon>
    </lineage>
</organism>
<accession>B5FNW1</accession>
<evidence type="ECO:0000255" key="1">
    <source>
        <dbReference type="HAMAP-Rule" id="MF_00172"/>
    </source>
</evidence>
<gene>
    <name evidence="1" type="primary">metE</name>
    <name type="ordered locus">SeD_A4351</name>
</gene>
<feature type="chain" id="PRO_1000097838" description="5-methyltetrahydropteroyltriglutamate--homocysteine methyltransferase">
    <location>
        <begin position="1"/>
        <end position="754"/>
    </location>
</feature>
<feature type="active site" description="Proton donor" evidence="1">
    <location>
        <position position="694"/>
    </location>
</feature>
<feature type="binding site" evidence="1">
    <location>
        <begin position="17"/>
        <end position="20"/>
    </location>
    <ligand>
        <name>5-methyltetrahydropteroyltri-L-glutamate</name>
        <dbReference type="ChEBI" id="CHEBI:58207"/>
    </ligand>
</feature>
<feature type="binding site" evidence="1">
    <location>
        <position position="117"/>
    </location>
    <ligand>
        <name>5-methyltetrahydropteroyltri-L-glutamate</name>
        <dbReference type="ChEBI" id="CHEBI:58207"/>
    </ligand>
</feature>
<feature type="binding site" evidence="1">
    <location>
        <begin position="431"/>
        <end position="433"/>
    </location>
    <ligand>
        <name>L-homocysteine</name>
        <dbReference type="ChEBI" id="CHEBI:58199"/>
    </ligand>
</feature>
<feature type="binding site" evidence="1">
    <location>
        <begin position="431"/>
        <end position="433"/>
    </location>
    <ligand>
        <name>L-methionine</name>
        <dbReference type="ChEBI" id="CHEBI:57844"/>
    </ligand>
</feature>
<feature type="binding site" evidence="1">
    <location>
        <position position="484"/>
    </location>
    <ligand>
        <name>L-homocysteine</name>
        <dbReference type="ChEBI" id="CHEBI:58199"/>
    </ligand>
</feature>
<feature type="binding site" evidence="1">
    <location>
        <position position="484"/>
    </location>
    <ligand>
        <name>L-methionine</name>
        <dbReference type="ChEBI" id="CHEBI:57844"/>
    </ligand>
</feature>
<feature type="binding site" evidence="1">
    <location>
        <begin position="515"/>
        <end position="516"/>
    </location>
    <ligand>
        <name>5-methyltetrahydropteroyltri-L-glutamate</name>
        <dbReference type="ChEBI" id="CHEBI:58207"/>
    </ligand>
</feature>
<feature type="binding site" evidence="1">
    <location>
        <position position="561"/>
    </location>
    <ligand>
        <name>5-methyltetrahydropteroyltri-L-glutamate</name>
        <dbReference type="ChEBI" id="CHEBI:58207"/>
    </ligand>
</feature>
<feature type="binding site" evidence="1">
    <location>
        <position position="599"/>
    </location>
    <ligand>
        <name>L-homocysteine</name>
        <dbReference type="ChEBI" id="CHEBI:58199"/>
    </ligand>
</feature>
<feature type="binding site" evidence="1">
    <location>
        <position position="599"/>
    </location>
    <ligand>
        <name>L-methionine</name>
        <dbReference type="ChEBI" id="CHEBI:57844"/>
    </ligand>
</feature>
<feature type="binding site" evidence="1">
    <location>
        <position position="605"/>
    </location>
    <ligand>
        <name>5-methyltetrahydropteroyltri-L-glutamate</name>
        <dbReference type="ChEBI" id="CHEBI:58207"/>
    </ligand>
</feature>
<feature type="binding site" evidence="1">
    <location>
        <position position="641"/>
    </location>
    <ligand>
        <name>Zn(2+)</name>
        <dbReference type="ChEBI" id="CHEBI:29105"/>
        <note>catalytic</note>
    </ligand>
</feature>
<feature type="binding site" evidence="1">
    <location>
        <position position="643"/>
    </location>
    <ligand>
        <name>Zn(2+)</name>
        <dbReference type="ChEBI" id="CHEBI:29105"/>
        <note>catalytic</note>
    </ligand>
</feature>
<feature type="binding site" evidence="1">
    <location>
        <position position="665"/>
    </location>
    <ligand>
        <name>Zn(2+)</name>
        <dbReference type="ChEBI" id="CHEBI:29105"/>
        <note>catalytic</note>
    </ligand>
</feature>
<feature type="binding site" evidence="1">
    <location>
        <position position="726"/>
    </location>
    <ligand>
        <name>Zn(2+)</name>
        <dbReference type="ChEBI" id="CHEBI:29105"/>
        <note>catalytic</note>
    </ligand>
</feature>
<protein>
    <recommendedName>
        <fullName evidence="1">5-methyltetrahydropteroyltriglutamate--homocysteine methyltransferase</fullName>
        <ecNumber evidence="1">2.1.1.14</ecNumber>
    </recommendedName>
    <alternativeName>
        <fullName evidence="1">Cobalamin-independent methionine synthase</fullName>
    </alternativeName>
    <alternativeName>
        <fullName evidence="1">Methionine synthase, vitamin-B12 independent isozyme</fullName>
    </alternativeName>
</protein>
<proteinExistence type="inferred from homology"/>
<keyword id="KW-0028">Amino-acid biosynthesis</keyword>
<keyword id="KW-0479">Metal-binding</keyword>
<keyword id="KW-0486">Methionine biosynthesis</keyword>
<keyword id="KW-0489">Methyltransferase</keyword>
<keyword id="KW-0677">Repeat</keyword>
<keyword id="KW-0808">Transferase</keyword>
<keyword id="KW-0862">Zinc</keyword>